<comment type="function">
    <text evidence="1">Antibacterial activity against Gram-positive bacterium S.aureus and Gram-negative bacterium E.coli. High antifungal activity against C.albicans and a strong hemolytic activity.</text>
</comment>
<comment type="subcellular location">
    <subcellularLocation>
        <location evidence="1">Secreted</location>
    </subcellularLocation>
</comment>
<comment type="tissue specificity">
    <text>Expressed by the skin glands.</text>
</comment>
<comment type="mass spectrometry"/>
<comment type="similarity">
    <text evidence="1">Belongs to the frog skin active peptide (FSAP) family. Brevinin subfamily.</text>
</comment>
<name>BR1A_RANBO</name>
<organism>
    <name type="scientific">Rana boylii</name>
    <name type="common">Foothill yellow-legged frog</name>
    <dbReference type="NCBI Taxonomy" id="160499"/>
    <lineage>
        <taxon>Eukaryota</taxon>
        <taxon>Metazoa</taxon>
        <taxon>Chordata</taxon>
        <taxon>Craniata</taxon>
        <taxon>Vertebrata</taxon>
        <taxon>Euteleostomi</taxon>
        <taxon>Amphibia</taxon>
        <taxon>Batrachia</taxon>
        <taxon>Anura</taxon>
        <taxon>Neobatrachia</taxon>
        <taxon>Ranoidea</taxon>
        <taxon>Ranidae</taxon>
        <taxon>Rana</taxon>
        <taxon>Rana</taxon>
    </lineage>
</organism>
<feature type="peptide" id="PRO_0000043532" description="Brevinin-1BYa">
    <location>
        <begin position="1"/>
        <end position="24"/>
    </location>
</feature>
<feature type="disulfide bond" evidence="1">
    <location>
        <begin position="18"/>
        <end position="24"/>
    </location>
</feature>
<feature type="helix" evidence="3">
    <location>
        <begin position="3"/>
        <end position="20"/>
    </location>
</feature>
<proteinExistence type="evidence at protein level"/>
<accession>P84111</accession>
<keyword id="KW-0002">3D-structure</keyword>
<keyword id="KW-0878">Amphibian defense peptide</keyword>
<keyword id="KW-0044">Antibiotic</keyword>
<keyword id="KW-0929">Antimicrobial</keyword>
<keyword id="KW-0204">Cytolysis</keyword>
<keyword id="KW-0903">Direct protein sequencing</keyword>
<keyword id="KW-1015">Disulfide bond</keyword>
<keyword id="KW-0295">Fungicide</keyword>
<keyword id="KW-0354">Hemolysis</keyword>
<keyword id="KW-0964">Secreted</keyword>
<dbReference type="PDB" id="6G4I">
    <property type="method" value="NMR"/>
    <property type="chains" value="A=1-24"/>
</dbReference>
<dbReference type="PDB" id="6G4K">
    <property type="method" value="NMR"/>
    <property type="chains" value="A=1-24"/>
</dbReference>
<dbReference type="PDB" id="6G4U">
    <property type="method" value="NMR"/>
    <property type="chains" value="A=1-24"/>
</dbReference>
<dbReference type="PDB" id="6G4V">
    <property type="method" value="NMR"/>
    <property type="chains" value="A=1-24"/>
</dbReference>
<dbReference type="PDB" id="6G4X">
    <property type="method" value="NMR"/>
    <property type="chains" value="A=1-24"/>
</dbReference>
<dbReference type="PDB" id="6R95">
    <property type="method" value="NMR"/>
    <property type="chains" value="A=1-23"/>
</dbReference>
<dbReference type="PDB" id="6R96">
    <property type="method" value="NMR"/>
    <property type="chains" value="A=1-23"/>
</dbReference>
<dbReference type="PDBsum" id="6G4I"/>
<dbReference type="PDBsum" id="6G4K"/>
<dbReference type="PDBsum" id="6G4U"/>
<dbReference type="PDBsum" id="6G4V"/>
<dbReference type="PDBsum" id="6G4X"/>
<dbReference type="PDBsum" id="6R95"/>
<dbReference type="PDBsum" id="6R96"/>
<dbReference type="BMRB" id="P84111"/>
<dbReference type="SMR" id="P84111"/>
<dbReference type="GO" id="GO:0005576">
    <property type="term" value="C:extracellular region"/>
    <property type="evidence" value="ECO:0007669"/>
    <property type="project" value="UniProtKB-SubCell"/>
</dbReference>
<dbReference type="GO" id="GO:0042742">
    <property type="term" value="P:defense response to bacterium"/>
    <property type="evidence" value="ECO:0007669"/>
    <property type="project" value="UniProtKB-KW"/>
</dbReference>
<dbReference type="GO" id="GO:0050832">
    <property type="term" value="P:defense response to fungus"/>
    <property type="evidence" value="ECO:0007669"/>
    <property type="project" value="UniProtKB-KW"/>
</dbReference>
<dbReference type="GO" id="GO:0031640">
    <property type="term" value="P:killing of cells of another organism"/>
    <property type="evidence" value="ECO:0007669"/>
    <property type="project" value="UniProtKB-KW"/>
</dbReference>
<dbReference type="InterPro" id="IPR012520">
    <property type="entry name" value="Antimicrobial_frog_1"/>
</dbReference>
<dbReference type="Pfam" id="PF08018">
    <property type="entry name" value="Antimicrobial_1"/>
    <property type="match status" value="1"/>
</dbReference>
<reference evidence="2" key="1">
    <citation type="journal article" date="2003" name="J. Pept. Res.">
        <title>Isolation of peptides of the brevinin-1 family with potent candidacidal activity from the skin secretions of the frog Rana boylii.</title>
        <authorList>
            <person name="Conlon J.M."/>
            <person name="Sonnevend A."/>
            <person name="Patel M."/>
            <person name="Davidson C."/>
            <person name="Nielsen P.F."/>
            <person name="Pal T."/>
            <person name="Rollins-Smith L.A."/>
        </authorList>
    </citation>
    <scope>PROTEIN SEQUENCE</scope>
    <scope>FUNCTION</scope>
    <scope>MASS SPECTROMETRY</scope>
    <source>
        <tissue evidence="1">Skin secretion</tissue>
    </source>
</reference>
<sequence>FLPILASLAAKFGPKLFCLVTKKC</sequence>
<protein>
    <recommendedName>
        <fullName>Brevinin-1BYa</fullName>
    </recommendedName>
</protein>
<evidence type="ECO:0000269" key="1">
    <source>
    </source>
</evidence>
<evidence type="ECO:0000305" key="2"/>
<evidence type="ECO:0007829" key="3">
    <source>
        <dbReference type="PDB" id="6G4I"/>
    </source>
</evidence>